<comment type="function">
    <text evidence="1">Catalyzes the NADPH-dependent rearrangement and reduction of 1-deoxy-D-xylulose-5-phosphate (DXP) to 2-C-methyl-D-erythritol 4-phosphate (MEP).</text>
</comment>
<comment type="catalytic activity">
    <reaction evidence="1">
        <text>2-C-methyl-D-erythritol 4-phosphate + NADP(+) = 1-deoxy-D-xylulose 5-phosphate + NADPH + H(+)</text>
        <dbReference type="Rhea" id="RHEA:13717"/>
        <dbReference type="ChEBI" id="CHEBI:15378"/>
        <dbReference type="ChEBI" id="CHEBI:57783"/>
        <dbReference type="ChEBI" id="CHEBI:57792"/>
        <dbReference type="ChEBI" id="CHEBI:58262"/>
        <dbReference type="ChEBI" id="CHEBI:58349"/>
        <dbReference type="EC" id="1.1.1.267"/>
    </reaction>
    <physiologicalReaction direction="right-to-left" evidence="1">
        <dbReference type="Rhea" id="RHEA:13719"/>
    </physiologicalReaction>
</comment>
<comment type="cofactor">
    <cofactor evidence="1">
        <name>Mg(2+)</name>
        <dbReference type="ChEBI" id="CHEBI:18420"/>
    </cofactor>
    <cofactor evidence="1">
        <name>Mn(2+)</name>
        <dbReference type="ChEBI" id="CHEBI:29035"/>
    </cofactor>
</comment>
<comment type="pathway">
    <text evidence="1">Isoprenoid biosynthesis; isopentenyl diphosphate biosynthesis via DXP pathway; isopentenyl diphosphate from 1-deoxy-D-xylulose 5-phosphate: step 1/6.</text>
</comment>
<comment type="similarity">
    <text evidence="1">Belongs to the DXR family.</text>
</comment>
<feature type="chain" id="PRO_1000124087" description="1-deoxy-D-xylulose 5-phosphate reductoisomerase">
    <location>
        <begin position="1"/>
        <end position="385"/>
    </location>
</feature>
<feature type="binding site" evidence="1">
    <location>
        <position position="10"/>
    </location>
    <ligand>
        <name>NADPH</name>
        <dbReference type="ChEBI" id="CHEBI:57783"/>
    </ligand>
</feature>
<feature type="binding site" evidence="1">
    <location>
        <position position="11"/>
    </location>
    <ligand>
        <name>NADPH</name>
        <dbReference type="ChEBI" id="CHEBI:57783"/>
    </ligand>
</feature>
<feature type="binding site" evidence="1">
    <location>
        <position position="12"/>
    </location>
    <ligand>
        <name>NADPH</name>
        <dbReference type="ChEBI" id="CHEBI:57783"/>
    </ligand>
</feature>
<feature type="binding site" evidence="1">
    <location>
        <position position="13"/>
    </location>
    <ligand>
        <name>NADPH</name>
        <dbReference type="ChEBI" id="CHEBI:57783"/>
    </ligand>
</feature>
<feature type="binding site" evidence="1">
    <location>
        <position position="124"/>
    </location>
    <ligand>
        <name>NADPH</name>
        <dbReference type="ChEBI" id="CHEBI:57783"/>
    </ligand>
</feature>
<feature type="binding site" evidence="1">
    <location>
        <position position="125"/>
    </location>
    <ligand>
        <name>1-deoxy-D-xylulose 5-phosphate</name>
        <dbReference type="ChEBI" id="CHEBI:57792"/>
    </ligand>
</feature>
<feature type="binding site" evidence="1">
    <location>
        <position position="126"/>
    </location>
    <ligand>
        <name>NADPH</name>
        <dbReference type="ChEBI" id="CHEBI:57783"/>
    </ligand>
</feature>
<feature type="binding site" evidence="1">
    <location>
        <position position="150"/>
    </location>
    <ligand>
        <name>Mn(2+)</name>
        <dbReference type="ChEBI" id="CHEBI:29035"/>
    </ligand>
</feature>
<feature type="binding site" evidence="1">
    <location>
        <position position="151"/>
    </location>
    <ligand>
        <name>1-deoxy-D-xylulose 5-phosphate</name>
        <dbReference type="ChEBI" id="CHEBI:57792"/>
    </ligand>
</feature>
<feature type="binding site" evidence="1">
    <location>
        <position position="152"/>
    </location>
    <ligand>
        <name>1-deoxy-D-xylulose 5-phosphate</name>
        <dbReference type="ChEBI" id="CHEBI:57792"/>
    </ligand>
</feature>
<feature type="binding site" evidence="1">
    <location>
        <position position="152"/>
    </location>
    <ligand>
        <name>Mn(2+)</name>
        <dbReference type="ChEBI" id="CHEBI:29035"/>
    </ligand>
</feature>
<feature type="binding site" evidence="1">
    <location>
        <position position="176"/>
    </location>
    <ligand>
        <name>1-deoxy-D-xylulose 5-phosphate</name>
        <dbReference type="ChEBI" id="CHEBI:57792"/>
    </ligand>
</feature>
<feature type="binding site" evidence="1">
    <location>
        <position position="199"/>
    </location>
    <ligand>
        <name>1-deoxy-D-xylulose 5-phosphate</name>
        <dbReference type="ChEBI" id="CHEBI:57792"/>
    </ligand>
</feature>
<feature type="binding site" evidence="1">
    <location>
        <position position="205"/>
    </location>
    <ligand>
        <name>NADPH</name>
        <dbReference type="ChEBI" id="CHEBI:57783"/>
    </ligand>
</feature>
<feature type="binding site" evidence="1">
    <location>
        <position position="212"/>
    </location>
    <ligand>
        <name>1-deoxy-D-xylulose 5-phosphate</name>
        <dbReference type="ChEBI" id="CHEBI:57792"/>
    </ligand>
</feature>
<feature type="binding site" evidence="1">
    <location>
        <position position="217"/>
    </location>
    <ligand>
        <name>1-deoxy-D-xylulose 5-phosphate</name>
        <dbReference type="ChEBI" id="CHEBI:57792"/>
    </ligand>
</feature>
<feature type="binding site" evidence="1">
    <location>
        <position position="218"/>
    </location>
    <ligand>
        <name>1-deoxy-D-xylulose 5-phosphate</name>
        <dbReference type="ChEBI" id="CHEBI:57792"/>
    </ligand>
</feature>
<feature type="binding site" evidence="1">
    <location>
        <position position="221"/>
    </location>
    <ligand>
        <name>1-deoxy-D-xylulose 5-phosphate</name>
        <dbReference type="ChEBI" id="CHEBI:57792"/>
    </ligand>
</feature>
<feature type="binding site" evidence="1">
    <location>
        <position position="221"/>
    </location>
    <ligand>
        <name>Mn(2+)</name>
        <dbReference type="ChEBI" id="CHEBI:29035"/>
    </ligand>
</feature>
<proteinExistence type="inferred from homology"/>
<protein>
    <recommendedName>
        <fullName evidence="1">1-deoxy-D-xylulose 5-phosphate reductoisomerase</fullName>
        <shortName evidence="1">DXP reductoisomerase</shortName>
        <ecNumber evidence="1">1.1.1.267</ecNumber>
    </recommendedName>
    <alternativeName>
        <fullName evidence="1">1-deoxyxylulose-5-phosphate reductoisomerase</fullName>
    </alternativeName>
    <alternativeName>
        <fullName evidence="1">2-C-methyl-D-erythritol 4-phosphate synthase</fullName>
    </alternativeName>
</protein>
<evidence type="ECO:0000255" key="1">
    <source>
        <dbReference type="HAMAP-Rule" id="MF_00183"/>
    </source>
</evidence>
<organism>
    <name type="scientific">Clostridium kluyveri (strain NBRC 12016)</name>
    <dbReference type="NCBI Taxonomy" id="583346"/>
    <lineage>
        <taxon>Bacteria</taxon>
        <taxon>Bacillati</taxon>
        <taxon>Bacillota</taxon>
        <taxon>Clostridia</taxon>
        <taxon>Eubacteriales</taxon>
        <taxon>Clostridiaceae</taxon>
        <taxon>Clostridium</taxon>
    </lineage>
</organism>
<name>DXR_CLOK1</name>
<keyword id="KW-0414">Isoprene biosynthesis</keyword>
<keyword id="KW-0464">Manganese</keyword>
<keyword id="KW-0479">Metal-binding</keyword>
<keyword id="KW-0521">NADP</keyword>
<keyword id="KW-0560">Oxidoreductase</keyword>
<sequence length="385" mass="43248">MKKISILGVTGSIGTQALDILRKDEENFKLVAVSSHSSVNKLLDIVDEFNPSYAVLTERNAYLKFKDHCSNKNLDTKILFGIDGLNTIVALPDIDMVLTSVVGMVGLVPTIKAIESGKDIALANKETLVVGGELVTKLAKKNKVKIFPVDSEHSAIFQCIKGNNFQDIEKLYLTASGGPFRGRTREQLFNVTVKEALNHPSWRMGKKLTIDSATLMNKGLEVIEAHFLFDMPYEKIKVVIHPESIVHSMVEYNDGSIMAQLSSTDMRLPIQYALNYAKRREALVNRLDFYNMKNLSFEKPDIDTFKPLKLAYDAGKIGGTMPAILNCANEAAVELFLFNKIKFLDISYILEECMNKFTCSNTYTIEDLLHIEIKVKKYVKDKFSK</sequence>
<dbReference type="EC" id="1.1.1.267" evidence="1"/>
<dbReference type="EMBL" id="AP009049">
    <property type="protein sequence ID" value="BAH06369.1"/>
    <property type="molecule type" value="Genomic_DNA"/>
</dbReference>
<dbReference type="RefSeq" id="WP_012101812.1">
    <property type="nucleotide sequence ID" value="NC_011837.1"/>
</dbReference>
<dbReference type="SMR" id="B9E1J4"/>
<dbReference type="KEGG" id="ckr:CKR_1318"/>
<dbReference type="HOGENOM" id="CLU_035714_4_0_9"/>
<dbReference type="UniPathway" id="UPA00056">
    <property type="reaction ID" value="UER00092"/>
</dbReference>
<dbReference type="Proteomes" id="UP000007969">
    <property type="component" value="Chromosome"/>
</dbReference>
<dbReference type="GO" id="GO:0030604">
    <property type="term" value="F:1-deoxy-D-xylulose-5-phosphate reductoisomerase activity"/>
    <property type="evidence" value="ECO:0007669"/>
    <property type="project" value="UniProtKB-UniRule"/>
</dbReference>
<dbReference type="GO" id="GO:0030145">
    <property type="term" value="F:manganese ion binding"/>
    <property type="evidence" value="ECO:0007669"/>
    <property type="project" value="TreeGrafter"/>
</dbReference>
<dbReference type="GO" id="GO:0070402">
    <property type="term" value="F:NADPH binding"/>
    <property type="evidence" value="ECO:0007669"/>
    <property type="project" value="InterPro"/>
</dbReference>
<dbReference type="GO" id="GO:0051484">
    <property type="term" value="P:isopentenyl diphosphate biosynthetic process, methylerythritol 4-phosphate pathway involved in terpenoid biosynthetic process"/>
    <property type="evidence" value="ECO:0007669"/>
    <property type="project" value="TreeGrafter"/>
</dbReference>
<dbReference type="FunFam" id="3.40.50.720:FF:000045">
    <property type="entry name" value="1-deoxy-D-xylulose 5-phosphate reductoisomerase"/>
    <property type="match status" value="1"/>
</dbReference>
<dbReference type="Gene3D" id="1.10.1740.10">
    <property type="match status" value="1"/>
</dbReference>
<dbReference type="Gene3D" id="3.40.50.720">
    <property type="entry name" value="NAD(P)-binding Rossmann-like Domain"/>
    <property type="match status" value="1"/>
</dbReference>
<dbReference type="HAMAP" id="MF_00183">
    <property type="entry name" value="DXP_reductoisom"/>
    <property type="match status" value="1"/>
</dbReference>
<dbReference type="InterPro" id="IPR003821">
    <property type="entry name" value="DXP_reductoisomerase"/>
</dbReference>
<dbReference type="InterPro" id="IPR013644">
    <property type="entry name" value="DXP_reductoisomerase_C"/>
</dbReference>
<dbReference type="InterPro" id="IPR013512">
    <property type="entry name" value="DXP_reductoisomerase_N"/>
</dbReference>
<dbReference type="InterPro" id="IPR026877">
    <property type="entry name" value="DXPR_C"/>
</dbReference>
<dbReference type="InterPro" id="IPR036169">
    <property type="entry name" value="DXPR_C_sf"/>
</dbReference>
<dbReference type="InterPro" id="IPR036291">
    <property type="entry name" value="NAD(P)-bd_dom_sf"/>
</dbReference>
<dbReference type="NCBIfam" id="TIGR00243">
    <property type="entry name" value="Dxr"/>
    <property type="match status" value="1"/>
</dbReference>
<dbReference type="NCBIfam" id="NF009114">
    <property type="entry name" value="PRK12464.1"/>
    <property type="match status" value="1"/>
</dbReference>
<dbReference type="PANTHER" id="PTHR30525">
    <property type="entry name" value="1-DEOXY-D-XYLULOSE 5-PHOSPHATE REDUCTOISOMERASE"/>
    <property type="match status" value="1"/>
</dbReference>
<dbReference type="PANTHER" id="PTHR30525:SF0">
    <property type="entry name" value="1-DEOXY-D-XYLULOSE 5-PHOSPHATE REDUCTOISOMERASE, CHLOROPLASTIC"/>
    <property type="match status" value="1"/>
</dbReference>
<dbReference type="Pfam" id="PF08436">
    <property type="entry name" value="DXP_redisom_C"/>
    <property type="match status" value="1"/>
</dbReference>
<dbReference type="Pfam" id="PF02670">
    <property type="entry name" value="DXP_reductoisom"/>
    <property type="match status" value="1"/>
</dbReference>
<dbReference type="Pfam" id="PF13288">
    <property type="entry name" value="DXPR_C"/>
    <property type="match status" value="1"/>
</dbReference>
<dbReference type="PIRSF" id="PIRSF006205">
    <property type="entry name" value="Dxp_reductismrs"/>
    <property type="match status" value="1"/>
</dbReference>
<dbReference type="SUPFAM" id="SSF69055">
    <property type="entry name" value="1-deoxy-D-xylulose-5-phosphate reductoisomerase, C-terminal domain"/>
    <property type="match status" value="1"/>
</dbReference>
<dbReference type="SUPFAM" id="SSF55347">
    <property type="entry name" value="Glyceraldehyde-3-phosphate dehydrogenase-like, C-terminal domain"/>
    <property type="match status" value="1"/>
</dbReference>
<dbReference type="SUPFAM" id="SSF51735">
    <property type="entry name" value="NAD(P)-binding Rossmann-fold domains"/>
    <property type="match status" value="1"/>
</dbReference>
<reference key="1">
    <citation type="submission" date="2005-09" db="EMBL/GenBank/DDBJ databases">
        <title>Complete genome sequence of Clostridium kluyveri and comparative genomics of Clostridia species.</title>
        <authorList>
            <person name="Inui M."/>
            <person name="Nonaka H."/>
            <person name="Shinoda Y."/>
            <person name="Ikenaga Y."/>
            <person name="Abe M."/>
            <person name="Naito K."/>
            <person name="Vertes A.A."/>
            <person name="Yukawa H."/>
        </authorList>
    </citation>
    <scope>NUCLEOTIDE SEQUENCE [LARGE SCALE GENOMIC DNA]</scope>
    <source>
        <strain>NBRC 12016</strain>
    </source>
</reference>
<gene>
    <name evidence="1" type="primary">dxr</name>
    <name type="ordered locus">CKR_1318</name>
</gene>
<accession>B9E1J4</accession>